<gene>
    <name evidence="1" type="primary">CVC2</name>
    <name type="ORF">BHRF3</name>
    <name type="ORF">U50</name>
</gene>
<feature type="chain" id="PRO_0000115998" description="Capsid vertex component 2">
    <location>
        <begin position="1"/>
        <end position="555"/>
    </location>
</feature>
<feature type="region of interest" description="Interaction with major capsid protein/MCP" evidence="1">
    <location>
        <begin position="1"/>
        <end position="47"/>
    </location>
</feature>
<protein>
    <recommendedName>
        <fullName evidence="1">Capsid vertex component 2</fullName>
    </recommendedName>
</protein>
<sequence>MAQCNLFYQYPITPILEGHVRNILICTEKDVEKLQSQSSLRLREKIDQGHRDKLLRMRLKTELDALQKKMQKDSDVLNSHLKAIEDALLFTNDGEVNVETKADAQLIPKSPEKLEKFNQVAITPLDPFIRFTDDFRGEMINTFFNNAQMWNFTFGSWFYKLKRVFYNEPGLRRALKLTNVDSLTISKELLAVTVNALEQATVYPIFGSEMSDLEAALCILAAFYSTYENSQIDERTTLVDVITLLPVIFRLLGSEITALKNVSPSGTYFGFNDPSCMKFFVPMRKGKHYAENTFGNHVLIKMLLGRGVMQKIPGEKISQNFDVEARLHGAIKNDVLVYWTYQLMRPKLGNNVPIFIHDQHYLRSGLVAIESLFLLWRILNSESLFNKRVGKFLLTSIFPQLENVDFAENNFEAGNIQNFEYLMHHYVVPMYNLQNDISISTLFPGLVAVCVNESVRLGWEHKCAGAPSDAVQVQSKENPFVEYIRAQMEQQADVAILEKHDCILFHLENGLNITLSFTLPRQRLFAMASSLFNVNDTYDFIYFLVLGFLPIPAVI</sequence>
<proteinExistence type="inferred from homology"/>
<organismHost>
    <name type="scientific">Homo sapiens</name>
    <name type="common">Human</name>
    <dbReference type="NCBI Taxonomy" id="9606"/>
</organismHost>
<keyword id="KW-0167">Capsid protein</keyword>
<keyword id="KW-1048">Host nucleus</keyword>
<keyword id="KW-0945">Host-virus interaction</keyword>
<keyword id="KW-1185">Reference proteome</keyword>
<keyword id="KW-0231">Viral genome packaging</keyword>
<keyword id="KW-1163">Viral penetration into host nucleus</keyword>
<keyword id="KW-1188">Viral release from host cell</keyword>
<keyword id="KW-0946">Virion</keyword>
<keyword id="KW-1160">Virus entry into host cell</keyword>
<dbReference type="EMBL" id="X83413">
    <property type="protein sequence ID" value="CAA58384.1"/>
    <property type="molecule type" value="Genomic_DNA"/>
</dbReference>
<dbReference type="EMBL" id="X64320">
    <property type="protein sequence ID" value="CAA45605.1"/>
    <property type="molecule type" value="Genomic_DNA"/>
</dbReference>
<dbReference type="RefSeq" id="NP_042943.1">
    <property type="nucleotide sequence ID" value="NC_001664.2"/>
</dbReference>
<dbReference type="SMR" id="P52387"/>
<dbReference type="DNASU" id="1487930"/>
<dbReference type="GeneID" id="1487930"/>
<dbReference type="KEGG" id="vg:1487930"/>
<dbReference type="Proteomes" id="UP000009295">
    <property type="component" value="Segment"/>
</dbReference>
<dbReference type="GO" id="GO:0043657">
    <property type="term" value="C:host cell"/>
    <property type="evidence" value="ECO:0007669"/>
    <property type="project" value="GOC"/>
</dbReference>
<dbReference type="GO" id="GO:0042025">
    <property type="term" value="C:host cell nucleus"/>
    <property type="evidence" value="ECO:0007669"/>
    <property type="project" value="UniProtKB-SubCell"/>
</dbReference>
<dbReference type="GO" id="GO:0019028">
    <property type="term" value="C:viral capsid"/>
    <property type="evidence" value="ECO:0007669"/>
    <property type="project" value="UniProtKB-KW"/>
</dbReference>
<dbReference type="GO" id="GO:0046718">
    <property type="term" value="P:symbiont entry into host cell"/>
    <property type="evidence" value="ECO:0007669"/>
    <property type="project" value="UniProtKB-KW"/>
</dbReference>
<dbReference type="GO" id="GO:0019072">
    <property type="term" value="P:viral genome packaging"/>
    <property type="evidence" value="ECO:0007669"/>
    <property type="project" value="InterPro"/>
</dbReference>
<dbReference type="GO" id="GO:0075732">
    <property type="term" value="P:viral penetration into host nucleus"/>
    <property type="evidence" value="ECO:0007669"/>
    <property type="project" value="UniProtKB-KW"/>
</dbReference>
<dbReference type="HAMAP" id="MF_04025">
    <property type="entry name" value="HSV_CVC2"/>
    <property type="match status" value="1"/>
</dbReference>
<dbReference type="InterPro" id="IPR002493">
    <property type="entry name" value="Herpes_UL25"/>
</dbReference>
<dbReference type="Pfam" id="PF01499">
    <property type="entry name" value="Herpes_UL25"/>
    <property type="match status" value="1"/>
</dbReference>
<comment type="function">
    <text evidence="1">Capsid vertex-specific component that plays a role during viral DNA encapsidation, assuring correct genome cleavage and presumably stabilizing capsids that contain full-length viral genomes. Participates in the interaction between the capsid and the tegument through interaction with the large tegument protein/LTP.</text>
</comment>
<comment type="subunit">
    <text evidence="1">Heterodimerizes with CVC1. Interacts with major capsid protein/MCP and triplex capsid protein 1/TRX1 at the pentamer vertices. Interacts with the large tegument protein/LTP.</text>
</comment>
<comment type="subcellular location">
    <subcellularLocation>
        <location evidence="1">Virion</location>
    </subcellularLocation>
    <subcellularLocation>
        <location evidence="1">Host nucleus</location>
    </subcellularLocation>
</comment>
<comment type="similarity">
    <text evidence="1">Belongs to the herpesviridae CVC2 protein family.</text>
</comment>
<organism>
    <name type="scientific">Human herpesvirus 6A (strain Uganda-1102)</name>
    <name type="common">HHV-6 variant A</name>
    <name type="synonym">Human B lymphotropic virus</name>
    <dbReference type="NCBI Taxonomy" id="10370"/>
    <lineage>
        <taxon>Viruses</taxon>
        <taxon>Duplodnaviria</taxon>
        <taxon>Heunggongvirae</taxon>
        <taxon>Peploviricota</taxon>
        <taxon>Herviviricetes</taxon>
        <taxon>Herpesvirales</taxon>
        <taxon>Orthoherpesviridae</taxon>
        <taxon>Betaherpesvirinae</taxon>
        <taxon>Roseolovirus</taxon>
        <taxon>Roseolovirus humanbeta6a</taxon>
        <taxon>Human betaherpesvirus 6A</taxon>
    </lineage>
</organism>
<accession>P52387</accession>
<reference key="1">
    <citation type="journal article" date="1995" name="Virology">
        <title>The DNA sequence of human herpesvirus-6: structure, coding content, and genome evolution.</title>
        <authorList>
            <person name="Gompels U.A."/>
            <person name="Nicholas J."/>
            <person name="Lawrence G.L."/>
            <person name="Jones M."/>
            <person name="Thomson B.J."/>
            <person name="Martin M.E.D."/>
            <person name="Efstathiou S."/>
            <person name="Craxton M.A."/>
            <person name="Macaulay H.A."/>
        </authorList>
    </citation>
    <scope>NUCLEOTIDE SEQUENCE [LARGE SCALE GENOMIC DNA]</scope>
</reference>
<reference key="2">
    <citation type="journal article" date="1992" name="DNA Seq.">
        <title>Infectivity determinants encoded in a conserved gene block of human herpesvirus-6.</title>
        <authorList>
            <person name="Gompels U.A."/>
            <person name="Carss A.L."/>
            <person name="Sun N."/>
            <person name="Arrand J.R."/>
        </authorList>
    </citation>
    <scope>NUCLEOTIDE SEQUENCE [GENOMIC DNA] OF 1-378</scope>
</reference>
<name>CVC2_HHV6U</name>
<evidence type="ECO:0000255" key="1">
    <source>
        <dbReference type="HAMAP-Rule" id="MF_04025"/>
    </source>
</evidence>